<gene>
    <name type="primary">cycA</name>
</gene>
<organism>
    <name type="scientific">Aspergillus niger</name>
    <dbReference type="NCBI Taxonomy" id="5061"/>
    <lineage>
        <taxon>Eukaryota</taxon>
        <taxon>Fungi</taxon>
        <taxon>Dikarya</taxon>
        <taxon>Ascomycota</taxon>
        <taxon>Pezizomycotina</taxon>
        <taxon>Eurotiomycetes</taxon>
        <taxon>Eurotiomycetidae</taxon>
        <taxon>Eurotiales</taxon>
        <taxon>Aspergillaceae</taxon>
        <taxon>Aspergillus</taxon>
        <taxon>Aspergillus subgen. Circumdati</taxon>
    </lineage>
</organism>
<feature type="chain" id="PRO_0000108317" description="Cytochrome c">
    <location>
        <begin position="1"/>
        <end position="111"/>
    </location>
</feature>
<feature type="binding site" description="covalent">
    <location>
        <position position="22"/>
    </location>
    <ligand>
        <name>heme c</name>
        <dbReference type="ChEBI" id="CHEBI:61717"/>
    </ligand>
</feature>
<feature type="binding site" description="covalent">
    <location>
        <position position="25"/>
    </location>
    <ligand>
        <name>heme c</name>
        <dbReference type="ChEBI" id="CHEBI:61717"/>
    </ligand>
</feature>
<feature type="binding site" description="axial binding residue">
    <location>
        <position position="26"/>
    </location>
    <ligand>
        <name>heme c</name>
        <dbReference type="ChEBI" id="CHEBI:61717"/>
    </ligand>
    <ligandPart>
        <name>Fe</name>
        <dbReference type="ChEBI" id="CHEBI:18248"/>
    </ligandPart>
</feature>
<feature type="binding site" description="axial binding residue" evidence="2">
    <location>
        <position position="88"/>
    </location>
    <ligand>
        <name>heme c</name>
        <dbReference type="ChEBI" id="CHEBI:61717"/>
    </ligand>
    <ligandPart>
        <name>Fe</name>
        <dbReference type="ChEBI" id="CHEBI:18248"/>
    </ligandPart>
</feature>
<feature type="modified residue" description="N6,N6,N6-trimethyllysine" evidence="1">
    <location>
        <position position="80"/>
    </location>
</feature>
<accession>P56205</accession>
<reference key="1">
    <citation type="journal article" date="1989" name="J. Protein Chem.">
        <title>Amino acid sequence of cytochrome c from Aspergillus niger.</title>
        <authorList>
            <person name="Chin C.C.Q."/>
            <person name="Niehaus W.G."/>
            <person name="Wold F."/>
        </authorList>
    </citation>
    <scope>PROTEIN SEQUENCE</scope>
</reference>
<keyword id="KW-0903">Direct protein sequencing</keyword>
<keyword id="KW-0249">Electron transport</keyword>
<keyword id="KW-0349">Heme</keyword>
<keyword id="KW-0408">Iron</keyword>
<keyword id="KW-0479">Metal-binding</keyword>
<keyword id="KW-0488">Methylation</keyword>
<keyword id="KW-0496">Mitochondrion</keyword>
<keyword id="KW-0679">Respiratory chain</keyword>
<keyword id="KW-0813">Transport</keyword>
<evidence type="ECO:0000250" key="1"/>
<evidence type="ECO:0000255" key="2">
    <source>
        <dbReference type="PROSITE-ProRule" id="PRU00433"/>
    </source>
</evidence>
<evidence type="ECO:0000305" key="3"/>
<name>CYC_ASPNG</name>
<comment type="function">
    <text>Electron carrier protein. The oxidized form of the cytochrome c heme group can accept an electron from the heme group of the cytochrome c1 subunit of cytochrome reductase. Cytochrome c then transfers this electron to the cytochrome oxidase complex, the final protein carrier in the mitochondrial electron-transport chain.</text>
</comment>
<comment type="subcellular location">
    <subcellularLocation>
        <location>Mitochondrion intermembrane space</location>
    </subcellularLocation>
    <text>Loosely associated with the inner membrane.</text>
</comment>
<comment type="PTM">
    <text>Binds 1 heme c group covalently per subunit.</text>
</comment>
<comment type="similarity">
    <text evidence="3">Belongs to the cytochrome c family.</text>
</comment>
<comment type="online information" name="Protein Spotlight">
    <link uri="https://www.proteinspotlight.org/back_issues/076"/>
    <text>Life shuttle - Issue 76 of November 2006</text>
</comment>
<protein>
    <recommendedName>
        <fullName>Cytochrome c</fullName>
    </recommendedName>
</protein>
<proteinExistence type="evidence at protein level"/>
<dbReference type="PIR" id="A61490">
    <property type="entry name" value="A61490"/>
</dbReference>
<dbReference type="SMR" id="P56205"/>
<dbReference type="PaxDb" id="5061-CADANGAP00001644"/>
<dbReference type="VEuPathDB" id="FungiDB:An02g01830"/>
<dbReference type="VEuPathDB" id="FungiDB:ASPNIDRAFT2_1144442"/>
<dbReference type="VEuPathDB" id="FungiDB:ATCC64974_60490"/>
<dbReference type="VEuPathDB" id="FungiDB:M747DRAFT_291904"/>
<dbReference type="eggNOG" id="KOG3453">
    <property type="taxonomic scope" value="Eukaryota"/>
</dbReference>
<dbReference type="GO" id="GO:0005758">
    <property type="term" value="C:mitochondrial intermembrane space"/>
    <property type="evidence" value="ECO:0007669"/>
    <property type="project" value="UniProtKB-SubCell"/>
</dbReference>
<dbReference type="GO" id="GO:0009055">
    <property type="term" value="F:electron transfer activity"/>
    <property type="evidence" value="ECO:0007669"/>
    <property type="project" value="InterPro"/>
</dbReference>
<dbReference type="GO" id="GO:0020037">
    <property type="term" value="F:heme binding"/>
    <property type="evidence" value="ECO:0007669"/>
    <property type="project" value="InterPro"/>
</dbReference>
<dbReference type="GO" id="GO:0046872">
    <property type="term" value="F:metal ion binding"/>
    <property type="evidence" value="ECO:0007669"/>
    <property type="project" value="UniProtKB-KW"/>
</dbReference>
<dbReference type="FunFam" id="1.10.760.10:FF:000001">
    <property type="entry name" value="Cytochrome c iso-1"/>
    <property type="match status" value="1"/>
</dbReference>
<dbReference type="Gene3D" id="1.10.760.10">
    <property type="entry name" value="Cytochrome c-like domain"/>
    <property type="match status" value="1"/>
</dbReference>
<dbReference type="InterPro" id="IPR009056">
    <property type="entry name" value="Cyt_c-like_dom"/>
</dbReference>
<dbReference type="InterPro" id="IPR036909">
    <property type="entry name" value="Cyt_c-like_dom_sf"/>
</dbReference>
<dbReference type="InterPro" id="IPR002327">
    <property type="entry name" value="Cyt_c_1A/1B"/>
</dbReference>
<dbReference type="PANTHER" id="PTHR11961">
    <property type="entry name" value="CYTOCHROME C"/>
    <property type="match status" value="1"/>
</dbReference>
<dbReference type="Pfam" id="PF00034">
    <property type="entry name" value="Cytochrom_C"/>
    <property type="match status" value="1"/>
</dbReference>
<dbReference type="PRINTS" id="PR00604">
    <property type="entry name" value="CYTCHRMECIAB"/>
</dbReference>
<dbReference type="SUPFAM" id="SSF46626">
    <property type="entry name" value="Cytochrome c"/>
    <property type="match status" value="1"/>
</dbReference>
<dbReference type="PROSITE" id="PS51007">
    <property type="entry name" value="CYTC"/>
    <property type="match status" value="1"/>
</dbReference>
<sequence length="111" mass="11954">GKDASFAPGDSAKGAKLFQTRCAQCHTVEAGGPHKVGPNLHGLFGRKTGQSEGYAYTDANKQAGVTWDENTLFSYLENPKKFIPGTKMAFGGLKKGKERNDLITYLKESTA</sequence>